<proteinExistence type="evidence at protein level"/>
<keyword id="KW-0460">Magnesium</keyword>
<keyword id="KW-0464">Manganese</keyword>
<keyword id="KW-0479">Metal-binding</keyword>
<keyword id="KW-0496">Mitochondrion</keyword>
<keyword id="KW-0520">NAD</keyword>
<keyword id="KW-0560">Oxidoreductase</keyword>
<keyword id="KW-1185">Reference proteome</keyword>
<keyword id="KW-0809">Transit peptide</keyword>
<keyword id="KW-0816">Tricarboxylic acid cycle</keyword>
<evidence type="ECO:0000250" key="1">
    <source>
        <dbReference type="UniProtKB" id="P93032"/>
    </source>
</evidence>
<evidence type="ECO:0000255" key="2"/>
<evidence type="ECO:0000269" key="3">
    <source>
    </source>
</evidence>
<evidence type="ECO:0000269" key="4">
    <source>
    </source>
</evidence>
<evidence type="ECO:0000305" key="5"/>
<dbReference type="EMBL" id="U81993">
    <property type="protein sequence ID" value="AAC49964.1"/>
    <property type="molecule type" value="mRNA"/>
</dbReference>
<dbReference type="EMBL" id="U82203">
    <property type="protein sequence ID" value="AAC49966.1"/>
    <property type="molecule type" value="Genomic_DNA"/>
</dbReference>
<dbReference type="EMBL" id="AL022604">
    <property type="protein sequence ID" value="CAA18743.1"/>
    <property type="molecule type" value="Genomic_DNA"/>
</dbReference>
<dbReference type="EMBL" id="AL161587">
    <property type="protein sequence ID" value="CAB80243.1"/>
    <property type="molecule type" value="Genomic_DNA"/>
</dbReference>
<dbReference type="EMBL" id="CP002687">
    <property type="protein sequence ID" value="AEE86486.1"/>
    <property type="molecule type" value="Genomic_DNA"/>
</dbReference>
<dbReference type="EMBL" id="AF428360">
    <property type="protein sequence ID" value="AAL16290.1"/>
    <property type="molecule type" value="mRNA"/>
</dbReference>
<dbReference type="EMBL" id="AY049260">
    <property type="protein sequence ID" value="AAK83602.1"/>
    <property type="molecule type" value="mRNA"/>
</dbReference>
<dbReference type="EMBL" id="AY129494">
    <property type="protein sequence ID" value="AAM91080.1"/>
    <property type="molecule type" value="mRNA"/>
</dbReference>
<dbReference type="EMBL" id="AY084937">
    <property type="protein sequence ID" value="AAM61498.1"/>
    <property type="molecule type" value="mRNA"/>
</dbReference>
<dbReference type="PIR" id="T06131">
    <property type="entry name" value="T06131"/>
</dbReference>
<dbReference type="RefSeq" id="NP_195252.1">
    <property type="nucleotide sequence ID" value="NM_119692.3"/>
</dbReference>
<dbReference type="SMR" id="Q8LFC0"/>
<dbReference type="BioGRID" id="14961">
    <property type="interactions" value="23"/>
</dbReference>
<dbReference type="FunCoup" id="Q8LFC0">
    <property type="interactions" value="3178"/>
</dbReference>
<dbReference type="IntAct" id="Q8LFC0">
    <property type="interactions" value="4"/>
</dbReference>
<dbReference type="STRING" id="3702.Q8LFC0"/>
<dbReference type="iPTMnet" id="Q8LFC0"/>
<dbReference type="PaxDb" id="3702-AT4G35260.1"/>
<dbReference type="ProteomicsDB" id="228793"/>
<dbReference type="EnsemblPlants" id="AT4G35260.1">
    <property type="protein sequence ID" value="AT4G35260.1"/>
    <property type="gene ID" value="AT4G35260"/>
</dbReference>
<dbReference type="GeneID" id="829679"/>
<dbReference type="Gramene" id="AT4G35260.1">
    <property type="protein sequence ID" value="AT4G35260.1"/>
    <property type="gene ID" value="AT4G35260"/>
</dbReference>
<dbReference type="KEGG" id="ath:AT4G35260"/>
<dbReference type="Araport" id="AT4G35260"/>
<dbReference type="TAIR" id="AT4G35260">
    <property type="gene designation" value="IDH1"/>
</dbReference>
<dbReference type="eggNOG" id="KOG0784">
    <property type="taxonomic scope" value="Eukaryota"/>
</dbReference>
<dbReference type="HOGENOM" id="CLU_031953_0_1_1"/>
<dbReference type="InParanoid" id="Q8LFC0"/>
<dbReference type="OMA" id="TCAHKAN"/>
<dbReference type="OrthoDB" id="10261637at2759"/>
<dbReference type="PhylomeDB" id="Q8LFC0"/>
<dbReference type="BRENDA" id="1.1.1.41">
    <property type="organism ID" value="399"/>
</dbReference>
<dbReference type="PRO" id="PR:Q8LFC0"/>
<dbReference type="Proteomes" id="UP000006548">
    <property type="component" value="Chromosome 4"/>
</dbReference>
<dbReference type="ExpressionAtlas" id="Q8LFC0">
    <property type="expression patterns" value="baseline and differential"/>
</dbReference>
<dbReference type="GO" id="GO:0005739">
    <property type="term" value="C:mitochondrion"/>
    <property type="evidence" value="ECO:0007005"/>
    <property type="project" value="TAIR"/>
</dbReference>
<dbReference type="GO" id="GO:0005886">
    <property type="term" value="C:plasma membrane"/>
    <property type="evidence" value="ECO:0007005"/>
    <property type="project" value="TAIR"/>
</dbReference>
<dbReference type="GO" id="GO:0004449">
    <property type="term" value="F:isocitrate dehydrogenase (NAD+) activity"/>
    <property type="evidence" value="ECO:0007669"/>
    <property type="project" value="UniProtKB-EC"/>
</dbReference>
<dbReference type="GO" id="GO:0008270">
    <property type="term" value="F:zinc ion binding"/>
    <property type="evidence" value="ECO:0007005"/>
    <property type="project" value="TAIR"/>
</dbReference>
<dbReference type="GO" id="GO:0006102">
    <property type="term" value="P:isocitrate metabolic process"/>
    <property type="evidence" value="ECO:0000315"/>
    <property type="project" value="TAIR"/>
</dbReference>
<dbReference type="GO" id="GO:0006099">
    <property type="term" value="P:tricarboxylic acid cycle"/>
    <property type="evidence" value="ECO:0000304"/>
    <property type="project" value="TAIR"/>
</dbReference>
<dbReference type="FunFam" id="3.40.718.10:FF:000009">
    <property type="entry name" value="Isocitrate dehydrogenase [NAD] regulatory subunit 1"/>
    <property type="match status" value="1"/>
</dbReference>
<dbReference type="Gene3D" id="3.40.718.10">
    <property type="entry name" value="Isopropylmalate Dehydrogenase"/>
    <property type="match status" value="1"/>
</dbReference>
<dbReference type="InterPro" id="IPR004434">
    <property type="entry name" value="Isocitrate_DH_NAD"/>
</dbReference>
<dbReference type="InterPro" id="IPR024084">
    <property type="entry name" value="IsoPropMal-DH-like_dom"/>
</dbReference>
<dbReference type="NCBIfam" id="TIGR00175">
    <property type="entry name" value="mito_nad_idh"/>
    <property type="match status" value="1"/>
</dbReference>
<dbReference type="PANTHER" id="PTHR11835">
    <property type="entry name" value="DECARBOXYLATING DEHYDROGENASES-ISOCITRATE, ISOPROPYLMALATE, TARTRATE"/>
    <property type="match status" value="1"/>
</dbReference>
<dbReference type="PANTHER" id="PTHR11835:SF80">
    <property type="entry name" value="ISOCITRATE DEHYDROGENASE [NAD] REGULATORY SUBUNIT 1, MITOCHONDRIAL-RELATED"/>
    <property type="match status" value="1"/>
</dbReference>
<dbReference type="Pfam" id="PF00180">
    <property type="entry name" value="Iso_dh"/>
    <property type="match status" value="1"/>
</dbReference>
<dbReference type="SMART" id="SM01329">
    <property type="entry name" value="Iso_dh"/>
    <property type="match status" value="1"/>
</dbReference>
<dbReference type="SUPFAM" id="SSF53659">
    <property type="entry name" value="Isocitrate/Isopropylmalate dehydrogenase-like"/>
    <property type="match status" value="1"/>
</dbReference>
<accession>Q8LFC0</accession>
<accession>O65501</accession>
<accession>P94015</accession>
<accession>Q7DM90</accession>
<sequence length="367" mass="39627">MSRRSLTLLKNLARNANGSGIQTRSVTYMPRPGDGAPRAVTLIPGDGIGPLVTNAVEQVMEAMHAPIFFEKYDVHGEMSRVPPEVMESIRKNKVCLKGGLKTPVGGGVSSLNVQLRKELDLFASLVNCFNLPGLPTRHENVDIVVIRENTEGEYAGLEHEVVPGVVESLKVITKFCSERIAKYAFEYAYLNNRKKVTAVHKANIMKLADGLFLESCREVAKKYPSITYNEIIVDNCCMQLVAKPEQFDVMVTPNLYGNLVANTAAGIAGGTGVMPGGNVGADHAVFEQGASAGNVGKDKIVLENKANPVALLLSSAMMLRHLQFPSFADRLETAVKKVIAEGKCRTKDLGGTSTTQEVVDAVIAKLD</sequence>
<comment type="function">
    <text evidence="1">Performs an essential role in the oxidative function of the citric acid cycle.</text>
</comment>
<comment type="subunit">
    <text>Heterooligomer of catalytic and regulatory subunits.</text>
</comment>
<comment type="subcellular location">
    <subcellularLocation>
        <location evidence="3">Mitochondrion</location>
    </subcellularLocation>
</comment>
<comment type="tissue specificity">
    <text evidence="4">Ubiquitous. Predominantly expressed in roots, stems and leaves.</text>
</comment>
<comment type="similarity">
    <text evidence="5">Belongs to the isocitrate and isopropylmalate dehydrogenases family.</text>
</comment>
<organism>
    <name type="scientific">Arabidopsis thaliana</name>
    <name type="common">Mouse-ear cress</name>
    <dbReference type="NCBI Taxonomy" id="3702"/>
    <lineage>
        <taxon>Eukaryota</taxon>
        <taxon>Viridiplantae</taxon>
        <taxon>Streptophyta</taxon>
        <taxon>Embryophyta</taxon>
        <taxon>Tracheophyta</taxon>
        <taxon>Spermatophyta</taxon>
        <taxon>Magnoliopsida</taxon>
        <taxon>eudicotyledons</taxon>
        <taxon>Gunneridae</taxon>
        <taxon>Pentapetalae</taxon>
        <taxon>rosids</taxon>
        <taxon>malvids</taxon>
        <taxon>Brassicales</taxon>
        <taxon>Brassicaceae</taxon>
        <taxon>Camelineae</taxon>
        <taxon>Arabidopsis</taxon>
    </lineage>
</organism>
<feature type="transit peptide" description="Mitochondrion" evidence="2">
    <location>
        <begin position="1"/>
        <end position="25"/>
    </location>
</feature>
<feature type="chain" id="PRO_0000271287" description="Isocitrate dehydrogenase [NAD] regulatory subunit 1, mitochondrial">
    <location>
        <begin position="26"/>
        <end position="367"/>
    </location>
</feature>
<feature type="sequence conflict" description="In Ref. 5; AAM61498." evidence="5" ref="5">
    <original>K</original>
    <variation>N</variation>
    <location>
        <position position="174"/>
    </location>
</feature>
<feature type="sequence conflict" description="In Ref. 1; AAC49964." evidence="5" ref="1">
    <original>L</original>
    <variation>P</variation>
    <location>
        <position position="331"/>
    </location>
</feature>
<feature type="sequence conflict" description="In Ref. 1; AAC49964." evidence="5" ref="1">
    <original>I</original>
    <variation>T</variation>
    <location>
        <position position="339"/>
    </location>
</feature>
<feature type="sequence conflict" description="In Ref. 5; AAM61498." evidence="5" ref="5">
    <original>C</original>
    <variation>F</variation>
    <location>
        <position position="344"/>
    </location>
</feature>
<feature type="sequence conflict" description="In Ref. 1; AAC49964." evidence="5" ref="1">
    <original>V</original>
    <variation>G</variation>
    <location>
        <position position="362"/>
    </location>
</feature>
<gene>
    <name type="primary">IDH1</name>
    <name type="ordered locus">At4g35260</name>
    <name type="ORF">F23E12.180</name>
</gene>
<name>IDH1_ARATH</name>
<reference key="1">
    <citation type="journal article" date="1998" name="Plant Mol. Biol.">
        <title>NAD(+)-dependent isocitrate dehydrogenase from Arabidopsis thaliana. Characterization of two closely related subunits.</title>
        <authorList>
            <person name="Behal R.H."/>
            <person name="Oliver D.J."/>
        </authorList>
    </citation>
    <scope>NUCLEOTIDE SEQUENCE [MRNA]</scope>
    <scope>NUCLEOTIDE SEQUENCE [GENOMIC DNA] OF 1-171</scope>
    <source>
        <strain>cv. Columbia</strain>
    </source>
</reference>
<reference key="2">
    <citation type="journal article" date="1999" name="Nature">
        <title>Sequence and analysis of chromosome 4 of the plant Arabidopsis thaliana.</title>
        <authorList>
            <person name="Mayer K.F.X."/>
            <person name="Schueller C."/>
            <person name="Wambutt R."/>
            <person name="Murphy G."/>
            <person name="Volckaert G."/>
            <person name="Pohl T."/>
            <person name="Duesterhoeft A."/>
            <person name="Stiekema W."/>
            <person name="Entian K.-D."/>
            <person name="Terryn N."/>
            <person name="Harris B."/>
            <person name="Ansorge W."/>
            <person name="Brandt P."/>
            <person name="Grivell L.A."/>
            <person name="Rieger M."/>
            <person name="Weichselgartner M."/>
            <person name="de Simone V."/>
            <person name="Obermaier B."/>
            <person name="Mache R."/>
            <person name="Mueller M."/>
            <person name="Kreis M."/>
            <person name="Delseny M."/>
            <person name="Puigdomenech P."/>
            <person name="Watson M."/>
            <person name="Schmidtheini T."/>
            <person name="Reichert B."/>
            <person name="Portetelle D."/>
            <person name="Perez-Alonso M."/>
            <person name="Boutry M."/>
            <person name="Bancroft I."/>
            <person name="Vos P."/>
            <person name="Hoheisel J."/>
            <person name="Zimmermann W."/>
            <person name="Wedler H."/>
            <person name="Ridley P."/>
            <person name="Langham S.-A."/>
            <person name="McCullagh B."/>
            <person name="Bilham L."/>
            <person name="Robben J."/>
            <person name="van der Schueren J."/>
            <person name="Grymonprez B."/>
            <person name="Chuang Y.-J."/>
            <person name="Vandenbussche F."/>
            <person name="Braeken M."/>
            <person name="Weltjens I."/>
            <person name="Voet M."/>
            <person name="Bastiaens I."/>
            <person name="Aert R."/>
            <person name="Defoor E."/>
            <person name="Weitzenegger T."/>
            <person name="Bothe G."/>
            <person name="Ramsperger U."/>
            <person name="Hilbert H."/>
            <person name="Braun M."/>
            <person name="Holzer E."/>
            <person name="Brandt A."/>
            <person name="Peters S."/>
            <person name="van Staveren M."/>
            <person name="Dirkse W."/>
            <person name="Mooijman P."/>
            <person name="Klein Lankhorst R."/>
            <person name="Rose M."/>
            <person name="Hauf J."/>
            <person name="Koetter P."/>
            <person name="Berneiser S."/>
            <person name="Hempel S."/>
            <person name="Feldpausch M."/>
            <person name="Lamberth S."/>
            <person name="Van den Daele H."/>
            <person name="De Keyser A."/>
            <person name="Buysshaert C."/>
            <person name="Gielen J."/>
            <person name="Villarroel R."/>
            <person name="De Clercq R."/>
            <person name="van Montagu M."/>
            <person name="Rogers J."/>
            <person name="Cronin A."/>
            <person name="Quail M.A."/>
            <person name="Bray-Allen S."/>
            <person name="Clark L."/>
            <person name="Doggett J."/>
            <person name="Hall S."/>
            <person name="Kay M."/>
            <person name="Lennard N."/>
            <person name="McLay K."/>
            <person name="Mayes R."/>
            <person name="Pettett A."/>
            <person name="Rajandream M.A."/>
            <person name="Lyne M."/>
            <person name="Benes V."/>
            <person name="Rechmann S."/>
            <person name="Borkova D."/>
            <person name="Bloecker H."/>
            <person name="Scharfe M."/>
            <person name="Grimm M."/>
            <person name="Loehnert T.-H."/>
            <person name="Dose S."/>
            <person name="de Haan M."/>
            <person name="Maarse A.C."/>
            <person name="Schaefer M."/>
            <person name="Mueller-Auer S."/>
            <person name="Gabel C."/>
            <person name="Fuchs M."/>
            <person name="Fartmann B."/>
            <person name="Granderath K."/>
            <person name="Dauner D."/>
            <person name="Herzl A."/>
            <person name="Neumann S."/>
            <person name="Argiriou A."/>
            <person name="Vitale D."/>
            <person name="Liguori R."/>
            <person name="Piravandi E."/>
            <person name="Massenet O."/>
            <person name="Quigley F."/>
            <person name="Clabauld G."/>
            <person name="Muendlein A."/>
            <person name="Felber R."/>
            <person name="Schnabl S."/>
            <person name="Hiller R."/>
            <person name="Schmidt W."/>
            <person name="Lecharny A."/>
            <person name="Aubourg S."/>
            <person name="Chefdor F."/>
            <person name="Cooke R."/>
            <person name="Berger C."/>
            <person name="Monfort A."/>
            <person name="Casacuberta E."/>
            <person name="Gibbons T."/>
            <person name="Weber N."/>
            <person name="Vandenbol M."/>
            <person name="Bargues M."/>
            <person name="Terol J."/>
            <person name="Torres A."/>
            <person name="Perez-Perez A."/>
            <person name="Purnelle B."/>
            <person name="Bent E."/>
            <person name="Johnson S."/>
            <person name="Tacon D."/>
            <person name="Jesse T."/>
            <person name="Heijnen L."/>
            <person name="Schwarz S."/>
            <person name="Scholler P."/>
            <person name="Heber S."/>
            <person name="Francs P."/>
            <person name="Bielke C."/>
            <person name="Frishman D."/>
            <person name="Haase D."/>
            <person name="Lemcke K."/>
            <person name="Mewes H.-W."/>
            <person name="Stocker S."/>
            <person name="Zaccaria P."/>
            <person name="Bevan M."/>
            <person name="Wilson R.K."/>
            <person name="de la Bastide M."/>
            <person name="Habermann K."/>
            <person name="Parnell L."/>
            <person name="Dedhia N."/>
            <person name="Gnoj L."/>
            <person name="Schutz K."/>
            <person name="Huang E."/>
            <person name="Spiegel L."/>
            <person name="Sekhon M."/>
            <person name="Murray J."/>
            <person name="Sheet P."/>
            <person name="Cordes M."/>
            <person name="Abu-Threideh J."/>
            <person name="Stoneking T."/>
            <person name="Kalicki J."/>
            <person name="Graves T."/>
            <person name="Harmon G."/>
            <person name="Edwards J."/>
            <person name="Latreille P."/>
            <person name="Courtney L."/>
            <person name="Cloud J."/>
            <person name="Abbott A."/>
            <person name="Scott K."/>
            <person name="Johnson D."/>
            <person name="Minx P."/>
            <person name="Bentley D."/>
            <person name="Fulton B."/>
            <person name="Miller N."/>
            <person name="Greco T."/>
            <person name="Kemp K."/>
            <person name="Kramer J."/>
            <person name="Fulton L."/>
            <person name="Mardis E."/>
            <person name="Dante M."/>
            <person name="Pepin K."/>
            <person name="Hillier L.W."/>
            <person name="Nelson J."/>
            <person name="Spieth J."/>
            <person name="Ryan E."/>
            <person name="Andrews S."/>
            <person name="Geisel C."/>
            <person name="Layman D."/>
            <person name="Du H."/>
            <person name="Ali J."/>
            <person name="Berghoff A."/>
            <person name="Jones K."/>
            <person name="Drone K."/>
            <person name="Cotton M."/>
            <person name="Joshu C."/>
            <person name="Antonoiu B."/>
            <person name="Zidanic M."/>
            <person name="Strong C."/>
            <person name="Sun H."/>
            <person name="Lamar B."/>
            <person name="Yordan C."/>
            <person name="Ma P."/>
            <person name="Zhong J."/>
            <person name="Preston R."/>
            <person name="Vil D."/>
            <person name="Shekher M."/>
            <person name="Matero A."/>
            <person name="Shah R."/>
            <person name="Swaby I.K."/>
            <person name="O'Shaughnessy A."/>
            <person name="Rodriguez M."/>
            <person name="Hoffman J."/>
            <person name="Till S."/>
            <person name="Granat S."/>
            <person name="Shohdy N."/>
            <person name="Hasegawa A."/>
            <person name="Hameed A."/>
            <person name="Lodhi M."/>
            <person name="Johnson A."/>
            <person name="Chen E."/>
            <person name="Marra M.A."/>
            <person name="Martienssen R."/>
            <person name="McCombie W.R."/>
        </authorList>
    </citation>
    <scope>NUCLEOTIDE SEQUENCE [LARGE SCALE GENOMIC DNA]</scope>
    <source>
        <strain>cv. Columbia</strain>
    </source>
</reference>
<reference key="3">
    <citation type="journal article" date="2017" name="Plant J.">
        <title>Araport11: a complete reannotation of the Arabidopsis thaliana reference genome.</title>
        <authorList>
            <person name="Cheng C.Y."/>
            <person name="Krishnakumar V."/>
            <person name="Chan A.P."/>
            <person name="Thibaud-Nissen F."/>
            <person name="Schobel S."/>
            <person name="Town C.D."/>
        </authorList>
    </citation>
    <scope>GENOME REANNOTATION</scope>
    <source>
        <strain>cv. Columbia</strain>
    </source>
</reference>
<reference key="4">
    <citation type="journal article" date="2003" name="Science">
        <title>Empirical analysis of transcriptional activity in the Arabidopsis genome.</title>
        <authorList>
            <person name="Yamada K."/>
            <person name="Lim J."/>
            <person name="Dale J.M."/>
            <person name="Chen H."/>
            <person name="Shinn P."/>
            <person name="Palm C.J."/>
            <person name="Southwick A.M."/>
            <person name="Wu H.C."/>
            <person name="Kim C.J."/>
            <person name="Nguyen M."/>
            <person name="Pham P.K."/>
            <person name="Cheuk R.F."/>
            <person name="Karlin-Newmann G."/>
            <person name="Liu S.X."/>
            <person name="Lam B."/>
            <person name="Sakano H."/>
            <person name="Wu T."/>
            <person name="Yu G."/>
            <person name="Miranda M."/>
            <person name="Quach H.L."/>
            <person name="Tripp M."/>
            <person name="Chang C.H."/>
            <person name="Lee J.M."/>
            <person name="Toriumi M.J."/>
            <person name="Chan M.M."/>
            <person name="Tang C.C."/>
            <person name="Onodera C.S."/>
            <person name="Deng J.M."/>
            <person name="Akiyama K."/>
            <person name="Ansari Y."/>
            <person name="Arakawa T."/>
            <person name="Banh J."/>
            <person name="Banno F."/>
            <person name="Bowser L."/>
            <person name="Brooks S.Y."/>
            <person name="Carninci P."/>
            <person name="Chao Q."/>
            <person name="Choy N."/>
            <person name="Enju A."/>
            <person name="Goldsmith A.D."/>
            <person name="Gurjal M."/>
            <person name="Hansen N.F."/>
            <person name="Hayashizaki Y."/>
            <person name="Johnson-Hopson C."/>
            <person name="Hsuan V.W."/>
            <person name="Iida K."/>
            <person name="Karnes M."/>
            <person name="Khan S."/>
            <person name="Koesema E."/>
            <person name="Ishida J."/>
            <person name="Jiang P.X."/>
            <person name="Jones T."/>
            <person name="Kawai J."/>
            <person name="Kamiya A."/>
            <person name="Meyers C."/>
            <person name="Nakajima M."/>
            <person name="Narusaka M."/>
            <person name="Seki M."/>
            <person name="Sakurai T."/>
            <person name="Satou M."/>
            <person name="Tamse R."/>
            <person name="Vaysberg M."/>
            <person name="Wallender E.K."/>
            <person name="Wong C."/>
            <person name="Yamamura Y."/>
            <person name="Yuan S."/>
            <person name="Shinozaki K."/>
            <person name="Davis R.W."/>
            <person name="Theologis A."/>
            <person name="Ecker J.R."/>
        </authorList>
    </citation>
    <scope>NUCLEOTIDE SEQUENCE [LARGE SCALE MRNA]</scope>
    <source>
        <strain>cv. Columbia</strain>
    </source>
</reference>
<reference key="5">
    <citation type="submission" date="2002-03" db="EMBL/GenBank/DDBJ databases">
        <title>Full-length cDNA from Arabidopsis thaliana.</title>
        <authorList>
            <person name="Brover V.V."/>
            <person name="Troukhan M.E."/>
            <person name="Alexandrov N.A."/>
            <person name="Lu Y.-P."/>
            <person name="Flavell R.B."/>
            <person name="Feldmann K.A."/>
        </authorList>
    </citation>
    <scope>NUCLEOTIDE SEQUENCE [LARGE SCALE MRNA]</scope>
</reference>
<reference key="6">
    <citation type="journal article" date="2004" name="Plant Cell">
        <title>Experimental analysis of the Arabidopsis mitochondrial proteome highlights signaling and regulatory components, provides assessment of targeting prediction programs, and indicates plant-specific mitochondrial proteins.</title>
        <authorList>
            <person name="Heazlewood J.L."/>
            <person name="Tonti-Filippini J.S."/>
            <person name="Gout A.M."/>
            <person name="Day D.A."/>
            <person name="Whelan J."/>
            <person name="Millar A.H."/>
        </authorList>
    </citation>
    <scope>IDENTIFICATION BY MASS SPECTROMETRY</scope>
    <scope>SUBCELLULAR LOCATION [LARGE SCALE ANALYSIS]</scope>
    <source>
        <strain>cv. Landsberg erecta</strain>
    </source>
</reference>
<reference key="7">
    <citation type="journal article" date="2004" name="Plant Sci.">
        <title>Characterization of a mutation in the IDH-II subunit of the NAD(+)-dependent isocitrate dehydrogenase from Arabidopsis thaliana.</title>
        <authorList>
            <person name="Lin M."/>
            <person name="Behal R.H."/>
            <person name="Oliver D.J."/>
        </authorList>
        <dbReference type="AGRICOLA" id="IND43633651"/>
    </citation>
    <scope>GENE FAMILY</scope>
</reference>
<reference key="8">
    <citation type="journal article" date="2006" name="Plant Cell Physiol.">
        <title>Expression analysis of Arabidopsis thaliana NAD-dependent isocitrate dehydrogenase genes shows the presence of a functional subunit that is mainly expressed in the pollen and absent from vegetative organs.</title>
        <authorList>
            <person name="Lemaitre T."/>
            <person name="Hodges M."/>
        </authorList>
    </citation>
    <scope>TISSUE SPECIFICITY</scope>
</reference>
<protein>
    <recommendedName>
        <fullName>Isocitrate dehydrogenase [NAD] regulatory subunit 1, mitochondrial</fullName>
    </recommendedName>
    <alternativeName>
        <fullName>IDH-I</fullName>
    </alternativeName>
    <alternativeName>
        <fullName>Isocitric dehydrogenase 1</fullName>
    </alternativeName>
    <alternativeName>
        <fullName>NAD(+)-specific ICDH 1</fullName>
    </alternativeName>
</protein>